<feature type="chain" id="PRO_0000445645" description="GRF-interacting factor 1">
    <location>
        <begin position="1"/>
        <end position="227"/>
    </location>
</feature>
<feature type="region of interest" description="Disordered" evidence="1">
    <location>
        <begin position="186"/>
        <end position="227"/>
    </location>
</feature>
<gene>
    <name evidence="7" type="primary">GIF1</name>
    <name evidence="6" type="synonym">AN3</name>
    <name evidence="10" type="ORF">ZEAMMB73_Zm00001d033905</name>
</gene>
<evidence type="ECO:0000256" key="1">
    <source>
        <dbReference type="SAM" id="MobiDB-lite"/>
    </source>
</evidence>
<evidence type="ECO:0000269" key="2">
    <source>
    </source>
</evidence>
<evidence type="ECO:0000269" key="3">
    <source>
    </source>
</evidence>
<evidence type="ECO:0000269" key="4">
    <source>
    </source>
</evidence>
<evidence type="ECO:0000269" key="5">
    <source ref="1"/>
</evidence>
<evidence type="ECO:0000303" key="6">
    <source>
    </source>
</evidence>
<evidence type="ECO:0000303" key="7">
    <source ref="1"/>
</evidence>
<evidence type="ECO:0000305" key="8"/>
<evidence type="ECO:0000305" key="9">
    <source>
    </source>
</evidence>
<evidence type="ECO:0000312" key="10">
    <source>
        <dbReference type="EMBL" id="ONM08905.1"/>
    </source>
</evidence>
<accession>A5HEH4</accession>
<accession>A0A2P0ZUD0</accession>
<dbReference type="EMBL" id="EF515854">
    <property type="protein sequence ID" value="ABQ01228.1"/>
    <property type="molecule type" value="mRNA"/>
</dbReference>
<dbReference type="EMBL" id="MG893020">
    <property type="protein sequence ID" value="AVI00625.1"/>
    <property type="status" value="ALT_SEQ"/>
    <property type="molecule type" value="Genomic_DNA"/>
</dbReference>
<dbReference type="EMBL" id="CM007647">
    <property type="protein sequence ID" value="ONM08905.1"/>
    <property type="molecule type" value="Genomic_DNA"/>
</dbReference>
<dbReference type="EMBL" id="EU960283">
    <property type="protein sequence ID" value="ACG32401.1"/>
    <property type="molecule type" value="mRNA"/>
</dbReference>
<dbReference type="EMBL" id="BT037547">
    <property type="protein sequence ID" value="ACF82552.1"/>
    <property type="molecule type" value="mRNA"/>
</dbReference>
<dbReference type="EMBL" id="BT042240">
    <property type="protein sequence ID" value="ACF87245.1"/>
    <property type="molecule type" value="mRNA"/>
</dbReference>
<dbReference type="RefSeq" id="NP_001106030.1">
    <property type="nucleotide sequence ID" value="NM_001112560.1"/>
</dbReference>
<dbReference type="SMR" id="A5HEH4"/>
<dbReference type="FunCoup" id="A5HEH4">
    <property type="interactions" value="3582"/>
</dbReference>
<dbReference type="IntAct" id="A5HEH4">
    <property type="interactions" value="7"/>
</dbReference>
<dbReference type="STRING" id="4577.A5HEH4"/>
<dbReference type="PaxDb" id="4577-GRMZM2G180246_P01"/>
<dbReference type="EnsemblPlants" id="Zm00001eb056300_T001">
    <property type="protein sequence ID" value="Zm00001eb056300_P001"/>
    <property type="gene ID" value="Zm00001eb056300"/>
</dbReference>
<dbReference type="GeneID" id="100101544"/>
<dbReference type="Gramene" id="Zm00001eb056300_T001">
    <property type="protein sequence ID" value="Zm00001eb056300_P001"/>
    <property type="gene ID" value="Zm00001eb056300"/>
</dbReference>
<dbReference type="KEGG" id="zma:100101544"/>
<dbReference type="eggNOG" id="KOG3227">
    <property type="taxonomic scope" value="Eukaryota"/>
</dbReference>
<dbReference type="HOGENOM" id="CLU_086253_0_0_1"/>
<dbReference type="InParanoid" id="A5HEH4"/>
<dbReference type="OMA" id="ENAHPGA"/>
<dbReference type="OrthoDB" id="10265171at2759"/>
<dbReference type="Proteomes" id="UP000007305">
    <property type="component" value="Chromosome 1"/>
</dbReference>
<dbReference type="ExpressionAtlas" id="A5HEH4">
    <property type="expression patterns" value="baseline and differential"/>
</dbReference>
<dbReference type="GO" id="GO:0005737">
    <property type="term" value="C:cytoplasm"/>
    <property type="evidence" value="ECO:0007669"/>
    <property type="project" value="EnsemblPlants"/>
</dbReference>
<dbReference type="GO" id="GO:0005634">
    <property type="term" value="C:nucleus"/>
    <property type="evidence" value="ECO:0007669"/>
    <property type="project" value="EnsemblPlants"/>
</dbReference>
<dbReference type="GO" id="GO:0009955">
    <property type="term" value="P:adaxial/abaxial pattern specification"/>
    <property type="evidence" value="ECO:0007669"/>
    <property type="project" value="EnsemblPlants"/>
</dbReference>
<dbReference type="GO" id="GO:0051301">
    <property type="term" value="P:cell division"/>
    <property type="evidence" value="ECO:0007669"/>
    <property type="project" value="EnsemblPlants"/>
</dbReference>
<dbReference type="GO" id="GO:0008283">
    <property type="term" value="P:cell population proliferation"/>
    <property type="evidence" value="ECO:0000315"/>
    <property type="project" value="UniProtKB"/>
</dbReference>
<dbReference type="GO" id="GO:0048825">
    <property type="term" value="P:cotyledon development"/>
    <property type="evidence" value="ECO:0007669"/>
    <property type="project" value="EnsemblPlants"/>
</dbReference>
<dbReference type="GO" id="GO:0010582">
    <property type="term" value="P:floral meristem determinacy"/>
    <property type="evidence" value="ECO:0000315"/>
    <property type="project" value="UniProtKB"/>
</dbReference>
<dbReference type="GO" id="GO:0048366">
    <property type="term" value="P:leaf development"/>
    <property type="evidence" value="ECO:0000315"/>
    <property type="project" value="UniProtKB"/>
</dbReference>
<dbReference type="GO" id="GO:0045893">
    <property type="term" value="P:positive regulation of DNA-templated transcription"/>
    <property type="evidence" value="ECO:0000314"/>
    <property type="project" value="UniProtKB"/>
</dbReference>
<dbReference type="GO" id="GO:0010449">
    <property type="term" value="P:root meristem growth"/>
    <property type="evidence" value="ECO:0007669"/>
    <property type="project" value="EnsemblPlants"/>
</dbReference>
<dbReference type="InterPro" id="IPR007726">
    <property type="entry name" value="SS18_N"/>
</dbReference>
<dbReference type="Pfam" id="PF05030">
    <property type="entry name" value="SSXT"/>
    <property type="match status" value="1"/>
</dbReference>
<comment type="function">
    <text evidence="3 4 9">Transcription coactivator that plays a role in the regulation of meristematic function in leaves, stems and inflorescences (PubMed:29437990). Regulates shoot architecture and meristem determinacy (PubMed:29437990). Binds to the inflorescence architecture gene UB3 (unbranched3) (PubMed:29437990). Regulates the expression of several genes involved in inflorescence architecture (PubMed:29437990). Component of a network formed by the microRNA396 (miRNA396), the GRFs and their interacting factors (GIFs) acting in the regulation of meristem function, at least partially through the control of cell proliferation (Probable) (PubMed:26036253). Associates with the core SWI/SNF chromatin-remodeling complex and specific GRFs to tightly regulate the transition between cell division and cell expansion in growing leaves (PubMed:26036253).</text>
</comment>
<comment type="subunit">
    <text evidence="2 3 4">Interacts with several GRFs (PubMed:26036253, PubMed:29437990). Interacts with GRF10 (PubMed:24854713, PubMed:29437990). Interacts with GRF1 (PubMed:24854713).</text>
</comment>
<comment type="tissue specificity">
    <text evidence="4 5">Expressed in shoots, aerial roots, ears and tassels (Ref.1). Expressed in the shoot apical meristem (SAM), young leaf primordia, leaf margins, inflorescence meristem, floral meristem and spikelet meristem (PubMed:29437990).</text>
</comment>
<comment type="disruption phenotype">
    <text evidence="4">Dwarf plants with narrow and small leaves, reduced number of branches in the tassel leaves, fasciated ears and sterile florets.</text>
</comment>
<comment type="similarity">
    <text evidence="8">Belongs to the SS18 family.</text>
</comment>
<comment type="sequence caution" evidence="8">
    <conflict type="erroneous gene model prediction">
        <sequence resource="EMBL-CDS" id="AVI00625"/>
    </conflict>
</comment>
<reference key="1">
    <citation type="journal article" date="2008" name="Plant Sci.">
        <title>Isolation and characterization of genes encoding GRF transcription factors and GIF transcriptional coactivators in Maize (Zea mays L.).</title>
        <authorList>
            <person name="Zhang D.F."/>
            <person name="Li B."/>
            <person name="Jia G.Q."/>
            <person name="Zhang T.F."/>
            <person name="Dai J.R."/>
            <person name="Li J.S."/>
            <person name="Wang S.C."/>
        </authorList>
        <dbReference type="AGRICOLA" id="IND44119307"/>
    </citation>
    <scope>NUCLEOTIDE SEQUENCE [MRNA]</scope>
    <scope>TISSUE SPECIFICITY</scope>
</reference>
<reference key="2">
    <citation type="journal article" date="2018" name="Plant Cell">
        <title>GRF-interacting factor1 regulates shoot architecture and meristem determinacy in maize.</title>
        <authorList>
            <person name="Zhang D."/>
            <person name="Sun W."/>
            <person name="Singh R."/>
            <person name="Zheng Y."/>
            <person name="Cao Z."/>
            <person name="Li M."/>
            <person name="Lunde C."/>
            <person name="Hake S."/>
            <person name="Zhang Z."/>
        </authorList>
    </citation>
    <scope>NUCLEOTIDE SEQUENCE [GENOMIC DNA]</scope>
    <scope>FUNCTION</scope>
    <scope>INTERACTION WITH GRF10</scope>
    <scope>TISSUE SPECIFICITY</scope>
    <scope>DISRUPTION PHENOTYPE</scope>
</reference>
<reference key="3">
    <citation type="journal article" date="2009" name="Science">
        <title>The B73 maize genome: complexity, diversity, and dynamics.</title>
        <authorList>
            <person name="Schnable P.S."/>
            <person name="Ware D."/>
            <person name="Fulton R.S."/>
            <person name="Stein J.C."/>
            <person name="Wei F."/>
            <person name="Pasternak S."/>
            <person name="Liang C."/>
            <person name="Zhang J."/>
            <person name="Fulton L."/>
            <person name="Graves T.A."/>
            <person name="Minx P."/>
            <person name="Reily A.D."/>
            <person name="Courtney L."/>
            <person name="Kruchowski S.S."/>
            <person name="Tomlinson C."/>
            <person name="Strong C."/>
            <person name="Delehaunty K."/>
            <person name="Fronick C."/>
            <person name="Courtney B."/>
            <person name="Rock S.M."/>
            <person name="Belter E."/>
            <person name="Du F."/>
            <person name="Kim K."/>
            <person name="Abbott R.M."/>
            <person name="Cotton M."/>
            <person name="Levy A."/>
            <person name="Marchetto P."/>
            <person name="Ochoa K."/>
            <person name="Jackson S.M."/>
            <person name="Gillam B."/>
            <person name="Chen W."/>
            <person name="Yan L."/>
            <person name="Higginbotham J."/>
            <person name="Cardenas M."/>
            <person name="Waligorski J."/>
            <person name="Applebaum E."/>
            <person name="Phelps L."/>
            <person name="Falcone J."/>
            <person name="Kanchi K."/>
            <person name="Thane T."/>
            <person name="Scimone A."/>
            <person name="Thane N."/>
            <person name="Henke J."/>
            <person name="Wang T."/>
            <person name="Ruppert J."/>
            <person name="Shah N."/>
            <person name="Rotter K."/>
            <person name="Hodges J."/>
            <person name="Ingenthron E."/>
            <person name="Cordes M."/>
            <person name="Kohlberg S."/>
            <person name="Sgro J."/>
            <person name="Delgado B."/>
            <person name="Mead K."/>
            <person name="Chinwalla A."/>
            <person name="Leonard S."/>
            <person name="Crouse K."/>
            <person name="Collura K."/>
            <person name="Kudrna D."/>
            <person name="Currie J."/>
            <person name="He R."/>
            <person name="Angelova A."/>
            <person name="Rajasekar S."/>
            <person name="Mueller T."/>
            <person name="Lomeli R."/>
            <person name="Scara G."/>
            <person name="Ko A."/>
            <person name="Delaney K."/>
            <person name="Wissotski M."/>
            <person name="Lopez G."/>
            <person name="Campos D."/>
            <person name="Braidotti M."/>
            <person name="Ashley E."/>
            <person name="Golser W."/>
            <person name="Kim H."/>
            <person name="Lee S."/>
            <person name="Lin J."/>
            <person name="Dujmic Z."/>
            <person name="Kim W."/>
            <person name="Talag J."/>
            <person name="Zuccolo A."/>
            <person name="Fan C."/>
            <person name="Sebastian A."/>
            <person name="Kramer M."/>
            <person name="Spiegel L."/>
            <person name="Nascimento L."/>
            <person name="Zutavern T."/>
            <person name="Miller B."/>
            <person name="Ambroise C."/>
            <person name="Muller S."/>
            <person name="Spooner W."/>
            <person name="Narechania A."/>
            <person name="Ren L."/>
            <person name="Wei S."/>
            <person name="Kumari S."/>
            <person name="Faga B."/>
            <person name="Levy M.J."/>
            <person name="McMahan L."/>
            <person name="Van Buren P."/>
            <person name="Vaughn M.W."/>
            <person name="Ying K."/>
            <person name="Yeh C.-T."/>
            <person name="Emrich S.J."/>
            <person name="Jia Y."/>
            <person name="Kalyanaraman A."/>
            <person name="Hsia A.-P."/>
            <person name="Barbazuk W.B."/>
            <person name="Baucom R.S."/>
            <person name="Brutnell T.P."/>
            <person name="Carpita N.C."/>
            <person name="Chaparro C."/>
            <person name="Chia J.-M."/>
            <person name="Deragon J.-M."/>
            <person name="Estill J.C."/>
            <person name="Fu Y."/>
            <person name="Jeddeloh J.A."/>
            <person name="Han Y."/>
            <person name="Lee H."/>
            <person name="Li P."/>
            <person name="Lisch D.R."/>
            <person name="Liu S."/>
            <person name="Liu Z."/>
            <person name="Nagel D.H."/>
            <person name="McCann M.C."/>
            <person name="SanMiguel P."/>
            <person name="Myers A.M."/>
            <person name="Nettleton D."/>
            <person name="Nguyen J."/>
            <person name="Penning B.W."/>
            <person name="Ponnala L."/>
            <person name="Schneider K.L."/>
            <person name="Schwartz D.C."/>
            <person name="Sharma A."/>
            <person name="Soderlund C."/>
            <person name="Springer N.M."/>
            <person name="Sun Q."/>
            <person name="Wang H."/>
            <person name="Waterman M."/>
            <person name="Westerman R."/>
            <person name="Wolfgruber T.K."/>
            <person name="Yang L."/>
            <person name="Yu Y."/>
            <person name="Zhang L."/>
            <person name="Zhou S."/>
            <person name="Zhu Q."/>
            <person name="Bennetzen J.L."/>
            <person name="Dawe R.K."/>
            <person name="Jiang J."/>
            <person name="Jiang N."/>
            <person name="Presting G.G."/>
            <person name="Wessler S.R."/>
            <person name="Aluru S."/>
            <person name="Martienssen R.A."/>
            <person name="Clifton S.W."/>
            <person name="McCombie W.R."/>
            <person name="Wing R.A."/>
            <person name="Wilson R.K."/>
        </authorList>
    </citation>
    <scope>NUCLEOTIDE SEQUENCE [LARGE SCALE GENOMIC DNA]</scope>
    <source>
        <strain>cv. B73</strain>
    </source>
</reference>
<reference key="4">
    <citation type="journal article" date="2009" name="Plant Mol. Biol.">
        <title>Insights into corn genes derived from large-scale cDNA sequencing.</title>
        <authorList>
            <person name="Alexandrov N.N."/>
            <person name="Brover V.V."/>
            <person name="Freidin S."/>
            <person name="Troukhan M.E."/>
            <person name="Tatarinova T.V."/>
            <person name="Zhang H."/>
            <person name="Swaller T.J."/>
            <person name="Lu Y.-P."/>
            <person name="Bouck J."/>
            <person name="Flavell R.B."/>
            <person name="Feldmann K.A."/>
        </authorList>
    </citation>
    <scope>NUCLEOTIDE SEQUENCE [LARGE SCALE MRNA]</scope>
</reference>
<reference key="5">
    <citation type="journal article" date="2009" name="PLoS Genet.">
        <title>Sequencing, mapping, and analysis of 27,455 maize full-length cDNAs.</title>
        <authorList>
            <person name="Soderlund C."/>
            <person name="Descour A."/>
            <person name="Kudrna D."/>
            <person name="Bomhoff M."/>
            <person name="Boyd L."/>
            <person name="Currie J."/>
            <person name="Angelova A."/>
            <person name="Collura K."/>
            <person name="Wissotski M."/>
            <person name="Ashley E."/>
            <person name="Morrow D."/>
            <person name="Fernandes J."/>
            <person name="Walbot V."/>
            <person name="Yu Y."/>
        </authorList>
    </citation>
    <scope>NUCLEOTIDE SEQUENCE [LARGE SCALE MRNA]</scope>
    <source>
        <strain>cv. B73</strain>
    </source>
</reference>
<reference key="6">
    <citation type="journal article" date="2014" name="J. Integr. Plant Biol.">
        <title>Overexpression of the maize GRF10, an endogenous truncated growth-regulating factor protein, leads to reduction in leaf size and plant height.</title>
        <authorList>
            <person name="Wu L."/>
            <person name="Zhang D."/>
            <person name="Xue M."/>
            <person name="Qian J."/>
            <person name="He Y."/>
            <person name="Wang S."/>
        </authorList>
    </citation>
    <scope>INTERACTION WITH GRF1 AND GRF10</scope>
</reference>
<reference key="7">
    <citation type="journal article" date="2015" name="Plant Cell">
        <title>Dynamic changes in ANGUSTIFOLIA3 complex composition reveal a growth regulatory mechanism in the maize leaf.</title>
        <authorList>
            <person name="Nelissen H."/>
            <person name="Eeckhout D."/>
            <person name="Demuynck K."/>
            <person name="Persiau G."/>
            <person name="Walton A."/>
            <person name="van Bel M."/>
            <person name="Vervoort M."/>
            <person name="Candaele J."/>
            <person name="De Block J."/>
            <person name="Aesaert S."/>
            <person name="Van Lijsebettens M."/>
            <person name="Goormachtig S."/>
            <person name="Vandepoele K."/>
            <person name="Van Leene J."/>
            <person name="Muszynski M."/>
            <person name="Gevaert K."/>
            <person name="Inze D."/>
            <person name="De Jaeger G."/>
        </authorList>
    </citation>
    <scope>FUNCTION</scope>
    <scope>INTERACTION WITH GRF</scope>
</reference>
<protein>
    <recommendedName>
        <fullName evidence="7">GRF-interacting factor 1</fullName>
        <shortName evidence="7">ZmGIF1</shortName>
    </recommendedName>
    <alternativeName>
        <fullName evidence="6">Protein ANGUSTIFOLIA 3 homolog</fullName>
    </alternativeName>
</protein>
<organism>
    <name type="scientific">Zea mays</name>
    <name type="common">Maize</name>
    <dbReference type="NCBI Taxonomy" id="4577"/>
    <lineage>
        <taxon>Eukaryota</taxon>
        <taxon>Viridiplantae</taxon>
        <taxon>Streptophyta</taxon>
        <taxon>Embryophyta</taxon>
        <taxon>Tracheophyta</taxon>
        <taxon>Spermatophyta</taxon>
        <taxon>Magnoliopsida</taxon>
        <taxon>Liliopsida</taxon>
        <taxon>Poales</taxon>
        <taxon>Poaceae</taxon>
        <taxon>PACMAD clade</taxon>
        <taxon>Panicoideae</taxon>
        <taxon>Andropogonodae</taxon>
        <taxon>Andropogoneae</taxon>
        <taxon>Tripsacinae</taxon>
        <taxon>Zea</taxon>
    </lineage>
</organism>
<sequence length="227" mass="23603">MQQQHLMQMNQNMMGGYTSPAAVTTDLIQQYLDENKQLILAILDNQNNGKAEECERHQAKLQHNLMYLAAIADSQPPQTAPLSQYPSNLMMQPGPRYMPPQSGQMMNPQSLMAARSSMMYAHPSLSPLQQQQAAHGQLGMAPGGGGGGTTSGFSILHGEASMGGGGAGAGAGNNMMNAGMFSGFGRSGSGAKEGSTSLSVDVRGGTSSGAQSGDGEYLKVGTEEEGS</sequence>
<keyword id="KW-0010">Activator</keyword>
<keyword id="KW-1185">Reference proteome</keyword>
<keyword id="KW-0804">Transcription</keyword>
<keyword id="KW-0805">Transcription regulation</keyword>
<proteinExistence type="evidence at protein level"/>
<name>GIF1_MAIZE</name>